<keyword id="KW-0963">Cytoplasm</keyword>
<keyword id="KW-0206">Cytoskeleton</keyword>
<keyword id="KW-0597">Phosphoprotein</keyword>
<keyword id="KW-1185">Reference proteome</keyword>
<evidence type="ECO:0000250" key="1">
    <source>
        <dbReference type="UniProtKB" id="Q5SVD0"/>
    </source>
</evidence>
<evidence type="ECO:0000250" key="2">
    <source>
        <dbReference type="UniProtKB" id="Q8N5W9"/>
    </source>
</evidence>
<evidence type="ECO:0000256" key="3">
    <source>
        <dbReference type="SAM" id="MobiDB-lite"/>
    </source>
</evidence>
<evidence type="ECO:0000305" key="4"/>
<evidence type="ECO:0000312" key="5">
    <source>
        <dbReference type="RGD" id="1359691"/>
    </source>
</evidence>
<organism>
    <name type="scientific">Rattus norvegicus</name>
    <name type="common">Rat</name>
    <dbReference type="NCBI Taxonomy" id="10116"/>
    <lineage>
        <taxon>Eukaryota</taxon>
        <taxon>Metazoa</taxon>
        <taxon>Chordata</taxon>
        <taxon>Craniata</taxon>
        <taxon>Vertebrata</taxon>
        <taxon>Euteleostomi</taxon>
        <taxon>Mammalia</taxon>
        <taxon>Eutheria</taxon>
        <taxon>Euarchontoglires</taxon>
        <taxon>Glires</taxon>
        <taxon>Rodentia</taxon>
        <taxon>Myomorpha</taxon>
        <taxon>Muroidea</taxon>
        <taxon>Muridae</taxon>
        <taxon>Murinae</taxon>
        <taxon>Rattus</taxon>
    </lineage>
</organism>
<reference key="1">
    <citation type="journal article" date="2004" name="Genome Res.">
        <title>The status, quality, and expansion of the NIH full-length cDNA project: the Mammalian Gene Collection (MGC).</title>
        <authorList>
            <consortium name="The MGC Project Team"/>
        </authorList>
    </citation>
    <scope>NUCLEOTIDE SEQUENCE [LARGE SCALE MRNA]</scope>
    <source>
        <tissue>Lung</tissue>
    </source>
</reference>
<feature type="chain" id="PRO_0000264633" description="Refilin-B">
    <location>
        <begin position="1"/>
        <end position="216"/>
    </location>
</feature>
<feature type="region of interest" description="Disordered" evidence="3">
    <location>
        <begin position="1"/>
        <end position="52"/>
    </location>
</feature>
<feature type="modified residue" description="Phosphoserine" evidence="2">
    <location>
        <position position="6"/>
    </location>
</feature>
<feature type="modified residue" description="Phosphoserine" evidence="1">
    <location>
        <position position="26"/>
    </location>
</feature>
<protein>
    <recommendedName>
        <fullName>Refilin-B</fullName>
    </recommendedName>
    <alternativeName>
        <fullName>Regulator of filamin protein B</fullName>
        <shortName>RefilinB</shortName>
    </alternativeName>
</protein>
<gene>
    <name evidence="5" type="primary">Rflnb</name>
    <name type="synonym">Fam101b</name>
</gene>
<accession>Q6AXS9</accession>
<comment type="function">
    <text evidence="1">Involved in the regulation of the perinuclear actin network and nuclear shape through interaction with filamins. Plays an essential role in the formation of cartilaginous skeletal elements.</text>
</comment>
<comment type="subunit">
    <text evidence="1">Interacts with FLNA and FLNB.</text>
</comment>
<comment type="subcellular location">
    <subcellularLocation>
        <location evidence="1">Cytoplasm</location>
        <location evidence="1">Cytoskeleton</location>
    </subcellularLocation>
    <text evidence="1">Colocalizes with FLNA along actin bundle-like structures.</text>
</comment>
<comment type="similarity">
    <text evidence="4">Belongs to the Refilin family.</text>
</comment>
<name>RFLB_RAT</name>
<dbReference type="EMBL" id="BC079330">
    <property type="protein sequence ID" value="AAH79330.1"/>
    <property type="molecule type" value="mRNA"/>
</dbReference>
<dbReference type="RefSeq" id="NP_001007612.1">
    <property type="nucleotide sequence ID" value="NM_001007611.1"/>
</dbReference>
<dbReference type="FunCoup" id="Q6AXS9">
    <property type="interactions" value="24"/>
</dbReference>
<dbReference type="STRING" id="10116.ENSRNOP00000008982"/>
<dbReference type="PhosphoSitePlus" id="Q6AXS9"/>
<dbReference type="PaxDb" id="10116-ENSRNOP00000008982"/>
<dbReference type="Ensembl" id="ENSRNOT00000008982.5">
    <property type="protein sequence ID" value="ENSRNOP00000008982.3"/>
    <property type="gene ID" value="ENSRNOG00000006674.5"/>
</dbReference>
<dbReference type="GeneID" id="287534"/>
<dbReference type="KEGG" id="rno:287534"/>
<dbReference type="AGR" id="RGD:1359691"/>
<dbReference type="CTD" id="359845"/>
<dbReference type="RGD" id="1359691">
    <property type="gene designation" value="Rflnb"/>
</dbReference>
<dbReference type="eggNOG" id="ENOG502RXSW">
    <property type="taxonomic scope" value="Eukaryota"/>
</dbReference>
<dbReference type="GeneTree" id="ENSGT00390000016836"/>
<dbReference type="HOGENOM" id="CLU_107206_0_0_1"/>
<dbReference type="InParanoid" id="Q6AXS9"/>
<dbReference type="OMA" id="PDMRKRG"/>
<dbReference type="OrthoDB" id="45633at9989"/>
<dbReference type="PhylomeDB" id="Q6AXS9"/>
<dbReference type="TreeFam" id="TF332387"/>
<dbReference type="PRO" id="PR:Q6AXS9"/>
<dbReference type="Proteomes" id="UP000002494">
    <property type="component" value="Chromosome 10"/>
</dbReference>
<dbReference type="Bgee" id="ENSRNOG00000006674">
    <property type="expression patterns" value="Expressed in stomach and 17 other cell types or tissues"/>
</dbReference>
<dbReference type="GO" id="GO:0015629">
    <property type="term" value="C:actin cytoskeleton"/>
    <property type="evidence" value="ECO:0000266"/>
    <property type="project" value="RGD"/>
</dbReference>
<dbReference type="GO" id="GO:0032432">
    <property type="term" value="C:actin filament bundle"/>
    <property type="evidence" value="ECO:0000266"/>
    <property type="project" value="RGD"/>
</dbReference>
<dbReference type="GO" id="GO:0005737">
    <property type="term" value="C:cytoplasm"/>
    <property type="evidence" value="ECO:0007669"/>
    <property type="project" value="UniProtKB-KW"/>
</dbReference>
<dbReference type="GO" id="GO:0031005">
    <property type="term" value="F:filamin binding"/>
    <property type="evidence" value="ECO:0000266"/>
    <property type="project" value="RGD"/>
</dbReference>
<dbReference type="GO" id="GO:0030036">
    <property type="term" value="P:actin cytoskeleton organization"/>
    <property type="evidence" value="ECO:0000266"/>
    <property type="project" value="RGD"/>
</dbReference>
<dbReference type="GO" id="GO:0061572">
    <property type="term" value="P:actin filament bundle organization"/>
    <property type="evidence" value="ECO:0000266"/>
    <property type="project" value="RGD"/>
</dbReference>
<dbReference type="GO" id="GO:0001837">
    <property type="term" value="P:epithelial to mesenchymal transition"/>
    <property type="evidence" value="ECO:0000266"/>
    <property type="project" value="RGD"/>
</dbReference>
<dbReference type="GO" id="GO:1900158">
    <property type="term" value="P:negative regulation of bone mineralization involved in bone maturation"/>
    <property type="evidence" value="ECO:0000266"/>
    <property type="project" value="RGD"/>
</dbReference>
<dbReference type="GO" id="GO:0061182">
    <property type="term" value="P:negative regulation of chondrocyte development"/>
    <property type="evidence" value="ECO:0000266"/>
    <property type="project" value="RGD"/>
</dbReference>
<dbReference type="GO" id="GO:0048705">
    <property type="term" value="P:skeletal system morphogenesis"/>
    <property type="evidence" value="ECO:0000266"/>
    <property type="project" value="RGD"/>
</dbReference>
<dbReference type="InterPro" id="IPR028215">
    <property type="entry name" value="Refilin"/>
</dbReference>
<dbReference type="PANTHER" id="PTHR31848">
    <property type="match status" value="1"/>
</dbReference>
<dbReference type="PANTHER" id="PTHR31848:SF2">
    <property type="entry name" value="REFILIN-B"/>
    <property type="match status" value="1"/>
</dbReference>
<dbReference type="Pfam" id="PF15068">
    <property type="entry name" value="FAM101"/>
    <property type="match status" value="1"/>
</dbReference>
<proteinExistence type="evidence at transcript level"/>
<sequence>MVGRLSLQDVPELVDTKKKGDGVLDSPDSGLPPSPSPSHWGLAAATGGGGERAPVAGTLEPDATVTSVVPNPASLSHSLAGICSPRLCPLSFGEGVEFDPLPPKEIKYTSSVKYDSERHFIDDVQMPLGLVVASCSQTVTCIPNCTWRNYKAEVRFEPRHKPARFLSTTIIYPKYPKTVYTTTLDYNCHKKLRRFLSSVELEATEFLGSDGLLDEC</sequence>